<feature type="chain" id="PRO_0000054746" description="Acetoacetyl-CoA reductase">
    <location>
        <begin position="1"/>
        <end position="248"/>
    </location>
</feature>
<feature type="active site" description="Proton acceptor" evidence="2">
    <location>
        <position position="155"/>
    </location>
</feature>
<feature type="binding site" evidence="1">
    <location>
        <begin position="14"/>
        <end position="16"/>
    </location>
    <ligand>
        <name>NADP(+)</name>
        <dbReference type="ChEBI" id="CHEBI:58349"/>
    </ligand>
</feature>
<feature type="binding site" evidence="1">
    <location>
        <position position="42"/>
    </location>
    <ligand>
        <name>NADP(+)</name>
        <dbReference type="ChEBI" id="CHEBI:58349"/>
    </ligand>
</feature>
<feature type="binding site" evidence="1">
    <location>
        <begin position="90"/>
        <end position="94"/>
    </location>
    <ligand>
        <name>NADP(+)</name>
        <dbReference type="ChEBI" id="CHEBI:58349"/>
    </ligand>
</feature>
<feature type="binding site" evidence="1">
    <location>
        <position position="96"/>
    </location>
    <ligand>
        <name>substrate</name>
    </ligand>
</feature>
<feature type="binding site" evidence="1">
    <location>
        <begin position="149"/>
        <end position="152"/>
    </location>
    <ligand>
        <name>substrate</name>
    </ligand>
</feature>
<feature type="binding site" evidence="1">
    <location>
        <begin position="185"/>
        <end position="188"/>
    </location>
    <ligand>
        <name>NADP(+)</name>
        <dbReference type="ChEBI" id="CHEBI:58349"/>
    </ligand>
</feature>
<feature type="binding site" evidence="1">
    <location>
        <begin position="186"/>
        <end position="187"/>
    </location>
    <ligand>
        <name>substrate</name>
    </ligand>
</feature>
<feature type="binding site" evidence="1">
    <location>
        <position position="197"/>
    </location>
    <ligand>
        <name>substrate</name>
    </ligand>
</feature>
<proteinExistence type="inferred from homology"/>
<dbReference type="EC" id="1.1.1.36"/>
<dbReference type="EMBL" id="L37761">
    <property type="protein sequence ID" value="AAA99472.1"/>
    <property type="molecule type" value="Genomic_DNA"/>
</dbReference>
<dbReference type="SMR" id="P50203"/>
<dbReference type="UniPathway" id="UPA00917"/>
<dbReference type="GO" id="GO:0005737">
    <property type="term" value="C:cytoplasm"/>
    <property type="evidence" value="ECO:0007669"/>
    <property type="project" value="UniProtKB-SubCell"/>
</dbReference>
<dbReference type="GO" id="GO:0018454">
    <property type="term" value="F:acetoacetyl-CoA reductase activity"/>
    <property type="evidence" value="ECO:0007669"/>
    <property type="project" value="UniProtKB-EC"/>
</dbReference>
<dbReference type="GO" id="GO:0006629">
    <property type="term" value="P:lipid metabolic process"/>
    <property type="evidence" value="ECO:0007669"/>
    <property type="project" value="UniProtKB-ARBA"/>
</dbReference>
<dbReference type="GO" id="GO:0032787">
    <property type="term" value="P:monocarboxylic acid metabolic process"/>
    <property type="evidence" value="ECO:0007669"/>
    <property type="project" value="UniProtKB-ARBA"/>
</dbReference>
<dbReference type="GO" id="GO:0042619">
    <property type="term" value="P:poly-hydroxybutyrate biosynthetic process"/>
    <property type="evidence" value="ECO:0007669"/>
    <property type="project" value="InterPro"/>
</dbReference>
<dbReference type="CDD" id="cd05333">
    <property type="entry name" value="BKR_SDR_c"/>
    <property type="match status" value="1"/>
</dbReference>
<dbReference type="FunFam" id="3.40.50.720:FF:000173">
    <property type="entry name" value="3-oxoacyl-[acyl-carrier protein] reductase"/>
    <property type="match status" value="1"/>
</dbReference>
<dbReference type="Gene3D" id="3.40.50.720">
    <property type="entry name" value="NAD(P)-binding Rossmann-like Domain"/>
    <property type="match status" value="1"/>
</dbReference>
<dbReference type="InterPro" id="IPR011283">
    <property type="entry name" value="Acetoacetyl-CoA_reductase"/>
</dbReference>
<dbReference type="InterPro" id="IPR036291">
    <property type="entry name" value="NAD(P)-bd_dom_sf"/>
</dbReference>
<dbReference type="InterPro" id="IPR020904">
    <property type="entry name" value="Sc_DH/Rdtase_CS"/>
</dbReference>
<dbReference type="InterPro" id="IPR050259">
    <property type="entry name" value="SDR"/>
</dbReference>
<dbReference type="InterPro" id="IPR002347">
    <property type="entry name" value="SDR_fam"/>
</dbReference>
<dbReference type="NCBIfam" id="TIGR01829">
    <property type="entry name" value="AcAcCoA_reduct"/>
    <property type="match status" value="1"/>
</dbReference>
<dbReference type="NCBIfam" id="NF009464">
    <property type="entry name" value="PRK12824.1"/>
    <property type="match status" value="1"/>
</dbReference>
<dbReference type="NCBIfam" id="NF009466">
    <property type="entry name" value="PRK12826.1-2"/>
    <property type="match status" value="1"/>
</dbReference>
<dbReference type="PANTHER" id="PTHR42879">
    <property type="entry name" value="3-OXOACYL-(ACYL-CARRIER-PROTEIN) REDUCTASE"/>
    <property type="match status" value="1"/>
</dbReference>
<dbReference type="PANTHER" id="PTHR42879:SF2">
    <property type="entry name" value="3-OXOACYL-[ACYL-CARRIER-PROTEIN] REDUCTASE FABG"/>
    <property type="match status" value="1"/>
</dbReference>
<dbReference type="Pfam" id="PF00106">
    <property type="entry name" value="adh_short"/>
    <property type="match status" value="1"/>
</dbReference>
<dbReference type="PRINTS" id="PR00081">
    <property type="entry name" value="GDHRDH"/>
</dbReference>
<dbReference type="PRINTS" id="PR00080">
    <property type="entry name" value="SDRFAMILY"/>
</dbReference>
<dbReference type="SMART" id="SM00822">
    <property type="entry name" value="PKS_KR"/>
    <property type="match status" value="1"/>
</dbReference>
<dbReference type="SUPFAM" id="SSF51735">
    <property type="entry name" value="NAD(P)-binding Rossmann-fold domains"/>
    <property type="match status" value="1"/>
</dbReference>
<dbReference type="PROSITE" id="PS00061">
    <property type="entry name" value="ADH_SHORT"/>
    <property type="match status" value="1"/>
</dbReference>
<reference key="1">
    <citation type="journal article" date="1995" name="J. Bacteriol.">
        <title>Phosphate concentration regulates transcription of the Acinetobacter polyhydroxyalkanoic acid biosynthetic genes.</title>
        <authorList>
            <person name="Schembri M.A."/>
            <person name="Bayly R.C."/>
            <person name="Davies J.K."/>
        </authorList>
    </citation>
    <scope>NUCLEOTIDE SEQUENCE [GENOMIC DNA]</scope>
</reference>
<keyword id="KW-0963">Cytoplasm</keyword>
<keyword id="KW-0521">NADP</keyword>
<keyword id="KW-0560">Oxidoreductase</keyword>
<sequence length="248" mass="26727">MSEQKVALVTGALGGIGSEICRQLVTAGYKIIATVVPREEDREKQWLQSEGFQDSDVRFVLTDLNNHEAATAAIQEAIAAEGRVDVLVNNAGITRDATFKKMSYEQWSQVIDTNLKTLFTVTQPVFNKMLEQKSGRIVNISSVNGLKGQFGQANYSASKAGIIGFTKALAQEGARSNICVNVVAPGYTATPMVTAMREDVIKSIEAQIPLQRLAAPAEIAAAVMYLVSEHGAYVTGETLSINGGLYMH</sequence>
<protein>
    <recommendedName>
        <fullName>Acetoacetyl-CoA reductase</fullName>
        <ecNumber>1.1.1.36</ecNumber>
    </recommendedName>
</protein>
<gene>
    <name type="primary">phaB</name>
</gene>
<comment type="catalytic activity">
    <reaction>
        <text>a (3R)-3-hydroxyacyl-CoA + NADP(+) = a 3-oxoacyl-CoA + NADPH + H(+)</text>
        <dbReference type="Rhea" id="RHEA:22256"/>
        <dbReference type="ChEBI" id="CHEBI:15378"/>
        <dbReference type="ChEBI" id="CHEBI:57319"/>
        <dbReference type="ChEBI" id="CHEBI:57783"/>
        <dbReference type="ChEBI" id="CHEBI:58349"/>
        <dbReference type="ChEBI" id="CHEBI:90726"/>
        <dbReference type="EC" id="1.1.1.36"/>
    </reaction>
</comment>
<comment type="pathway">
    <text>Biopolymer metabolism; poly-(R)-3-hydroxybutanoate biosynthesis.</text>
</comment>
<comment type="subcellular location">
    <subcellularLocation>
        <location>Cytoplasm</location>
    </subcellularLocation>
</comment>
<comment type="similarity">
    <text evidence="3">Belongs to the short-chain dehydrogenases/reductases (SDR) family.</text>
</comment>
<accession>P50203</accession>
<organism>
    <name type="scientific">Acinetobacter sp. (strain RA3849)</name>
    <dbReference type="NCBI Taxonomy" id="68994"/>
    <lineage>
        <taxon>Bacteria</taxon>
        <taxon>Pseudomonadati</taxon>
        <taxon>Pseudomonadota</taxon>
        <taxon>Gammaproteobacteria</taxon>
        <taxon>Moraxellales</taxon>
        <taxon>Moraxellaceae</taxon>
        <taxon>Acinetobacter</taxon>
    </lineage>
</organism>
<evidence type="ECO:0000250" key="1"/>
<evidence type="ECO:0000255" key="2">
    <source>
        <dbReference type="PROSITE-ProRule" id="PRU10001"/>
    </source>
</evidence>
<evidence type="ECO:0000305" key="3"/>
<name>PHAB_ACISR</name>